<gene>
    <name evidence="1" type="primary">bioB</name>
    <name type="ordered locus">BA_4336</name>
    <name type="ordered locus">GBAA_4336</name>
    <name type="ordered locus">BAS4023</name>
</gene>
<evidence type="ECO:0000255" key="1">
    <source>
        <dbReference type="HAMAP-Rule" id="MF_01694"/>
    </source>
</evidence>
<evidence type="ECO:0000255" key="2">
    <source>
        <dbReference type="PROSITE-ProRule" id="PRU01266"/>
    </source>
</evidence>
<accession>Q81MB3</accession>
<accession>Q6HTR5</accession>
<accession>Q6KN03</accession>
<feature type="chain" id="PRO_0000381217" description="Biotin synthase">
    <location>
        <begin position="1"/>
        <end position="332"/>
    </location>
</feature>
<feature type="domain" description="Radical SAM core" evidence="2">
    <location>
        <begin position="53"/>
        <end position="282"/>
    </location>
</feature>
<feature type="binding site" evidence="1">
    <location>
        <position position="71"/>
    </location>
    <ligand>
        <name>[4Fe-4S] cluster</name>
        <dbReference type="ChEBI" id="CHEBI:49883"/>
        <note>4Fe-4S-S-AdoMet</note>
    </ligand>
</feature>
<feature type="binding site" evidence="1">
    <location>
        <position position="75"/>
    </location>
    <ligand>
        <name>[4Fe-4S] cluster</name>
        <dbReference type="ChEBI" id="CHEBI:49883"/>
        <note>4Fe-4S-S-AdoMet</note>
    </ligand>
</feature>
<feature type="binding site" evidence="1">
    <location>
        <position position="78"/>
    </location>
    <ligand>
        <name>[4Fe-4S] cluster</name>
        <dbReference type="ChEBI" id="CHEBI:49883"/>
        <note>4Fe-4S-S-AdoMet</note>
    </ligand>
</feature>
<feature type="binding site" evidence="1">
    <location>
        <position position="115"/>
    </location>
    <ligand>
        <name>[2Fe-2S] cluster</name>
        <dbReference type="ChEBI" id="CHEBI:190135"/>
    </ligand>
</feature>
<feature type="binding site" evidence="1">
    <location>
        <position position="147"/>
    </location>
    <ligand>
        <name>[2Fe-2S] cluster</name>
        <dbReference type="ChEBI" id="CHEBI:190135"/>
    </ligand>
</feature>
<feature type="binding site" evidence="1">
    <location>
        <position position="207"/>
    </location>
    <ligand>
        <name>[2Fe-2S] cluster</name>
        <dbReference type="ChEBI" id="CHEBI:190135"/>
    </ligand>
</feature>
<feature type="binding site" evidence="1">
    <location>
        <position position="277"/>
    </location>
    <ligand>
        <name>[2Fe-2S] cluster</name>
        <dbReference type="ChEBI" id="CHEBI:190135"/>
    </ligand>
</feature>
<sequence>MKQVQTKRDWKKLAYDVVEEKMITKEDAIAILEADDTEVLEIMNAAYIIRHHYFGKKVKLNMIINTKSGLCPEDCGYCSQSIISEAPIDKYAWLTQEKIVEGAHEAIRRKAGTYCIVASGRRPTDKEVNHVIGAVKEIRETTDLKICCCLGFLNEDQAGRLAEAGVHRYNHNLNTHANNYESICSTHTYDDRVDTVQKAKQAGISPCSGAIFGMGETIEERAEIAFELQRIDADSIPCNFLVAVKGTPLEGQKELTPVECLKVLAMMRFVNPTKEIRISGGREINLRSVQPIGLFAANSIFVGDYLTTAGQEPTADWGMIEDLGFEIEECAL</sequence>
<organism>
    <name type="scientific">Bacillus anthracis</name>
    <dbReference type="NCBI Taxonomy" id="1392"/>
    <lineage>
        <taxon>Bacteria</taxon>
        <taxon>Bacillati</taxon>
        <taxon>Bacillota</taxon>
        <taxon>Bacilli</taxon>
        <taxon>Bacillales</taxon>
        <taxon>Bacillaceae</taxon>
        <taxon>Bacillus</taxon>
        <taxon>Bacillus cereus group</taxon>
    </lineage>
</organism>
<proteinExistence type="inferred from homology"/>
<dbReference type="EC" id="2.8.1.6" evidence="1"/>
<dbReference type="EMBL" id="AE016879">
    <property type="protein sequence ID" value="AAP28055.1"/>
    <property type="molecule type" value="Genomic_DNA"/>
</dbReference>
<dbReference type="EMBL" id="AE017334">
    <property type="protein sequence ID" value="AAT33457.1"/>
    <property type="molecule type" value="Genomic_DNA"/>
</dbReference>
<dbReference type="EMBL" id="AE017225">
    <property type="protein sequence ID" value="AAT56324.1"/>
    <property type="molecule type" value="Genomic_DNA"/>
</dbReference>
<dbReference type="RefSeq" id="NP_846569.1">
    <property type="nucleotide sequence ID" value="NC_003997.3"/>
</dbReference>
<dbReference type="RefSeq" id="WP_000815862.1">
    <property type="nucleotide sequence ID" value="NZ_WXXJ01000027.1"/>
</dbReference>
<dbReference type="RefSeq" id="YP_030273.1">
    <property type="nucleotide sequence ID" value="NC_005945.1"/>
</dbReference>
<dbReference type="SMR" id="Q81MB3"/>
<dbReference type="IntAct" id="Q81MB3">
    <property type="interactions" value="1"/>
</dbReference>
<dbReference type="STRING" id="261594.GBAA_4336"/>
<dbReference type="DNASU" id="1087549"/>
<dbReference type="GeneID" id="45024003"/>
<dbReference type="KEGG" id="ban:BA_4336"/>
<dbReference type="KEGG" id="banh:HYU01_21180"/>
<dbReference type="KEGG" id="bar:GBAA_4336"/>
<dbReference type="KEGG" id="bat:BAS4023"/>
<dbReference type="PATRIC" id="fig|198094.11.peg.4305"/>
<dbReference type="eggNOG" id="COG0502">
    <property type="taxonomic scope" value="Bacteria"/>
</dbReference>
<dbReference type="HOGENOM" id="CLU_033172_2_1_9"/>
<dbReference type="OMA" id="NICTTHT"/>
<dbReference type="OrthoDB" id="9786826at2"/>
<dbReference type="UniPathway" id="UPA00078">
    <property type="reaction ID" value="UER00162"/>
</dbReference>
<dbReference type="Proteomes" id="UP000000427">
    <property type="component" value="Chromosome"/>
</dbReference>
<dbReference type="Proteomes" id="UP000000594">
    <property type="component" value="Chromosome"/>
</dbReference>
<dbReference type="GO" id="GO:0051537">
    <property type="term" value="F:2 iron, 2 sulfur cluster binding"/>
    <property type="evidence" value="ECO:0007669"/>
    <property type="project" value="UniProtKB-KW"/>
</dbReference>
<dbReference type="GO" id="GO:0051539">
    <property type="term" value="F:4 iron, 4 sulfur cluster binding"/>
    <property type="evidence" value="ECO:0007669"/>
    <property type="project" value="UniProtKB-KW"/>
</dbReference>
<dbReference type="GO" id="GO:0004076">
    <property type="term" value="F:biotin synthase activity"/>
    <property type="evidence" value="ECO:0007669"/>
    <property type="project" value="UniProtKB-UniRule"/>
</dbReference>
<dbReference type="GO" id="GO:0005506">
    <property type="term" value="F:iron ion binding"/>
    <property type="evidence" value="ECO:0007669"/>
    <property type="project" value="UniProtKB-UniRule"/>
</dbReference>
<dbReference type="GO" id="GO:0009102">
    <property type="term" value="P:biotin biosynthetic process"/>
    <property type="evidence" value="ECO:0007669"/>
    <property type="project" value="UniProtKB-UniRule"/>
</dbReference>
<dbReference type="CDD" id="cd01335">
    <property type="entry name" value="Radical_SAM"/>
    <property type="match status" value="1"/>
</dbReference>
<dbReference type="FunFam" id="3.20.20.70:FF:000026">
    <property type="entry name" value="Biotin synthase"/>
    <property type="match status" value="1"/>
</dbReference>
<dbReference type="Gene3D" id="3.20.20.70">
    <property type="entry name" value="Aldolase class I"/>
    <property type="match status" value="1"/>
</dbReference>
<dbReference type="HAMAP" id="MF_01694">
    <property type="entry name" value="BioB"/>
    <property type="match status" value="1"/>
</dbReference>
<dbReference type="InterPro" id="IPR013785">
    <property type="entry name" value="Aldolase_TIM"/>
</dbReference>
<dbReference type="InterPro" id="IPR010722">
    <property type="entry name" value="BATS_dom"/>
</dbReference>
<dbReference type="InterPro" id="IPR002684">
    <property type="entry name" value="Biotin_synth/BioAB"/>
</dbReference>
<dbReference type="InterPro" id="IPR024177">
    <property type="entry name" value="Biotin_synthase"/>
</dbReference>
<dbReference type="InterPro" id="IPR006638">
    <property type="entry name" value="Elp3/MiaA/NifB-like_rSAM"/>
</dbReference>
<dbReference type="InterPro" id="IPR007197">
    <property type="entry name" value="rSAM"/>
</dbReference>
<dbReference type="NCBIfam" id="TIGR00433">
    <property type="entry name" value="bioB"/>
    <property type="match status" value="1"/>
</dbReference>
<dbReference type="PANTHER" id="PTHR22976">
    <property type="entry name" value="BIOTIN SYNTHASE"/>
    <property type="match status" value="1"/>
</dbReference>
<dbReference type="PANTHER" id="PTHR22976:SF2">
    <property type="entry name" value="BIOTIN SYNTHASE, MITOCHONDRIAL"/>
    <property type="match status" value="1"/>
</dbReference>
<dbReference type="Pfam" id="PF06968">
    <property type="entry name" value="BATS"/>
    <property type="match status" value="1"/>
</dbReference>
<dbReference type="Pfam" id="PF04055">
    <property type="entry name" value="Radical_SAM"/>
    <property type="match status" value="1"/>
</dbReference>
<dbReference type="PIRSF" id="PIRSF001619">
    <property type="entry name" value="Biotin_synth"/>
    <property type="match status" value="1"/>
</dbReference>
<dbReference type="SFLD" id="SFLDG01060">
    <property type="entry name" value="BATS_domain_containing"/>
    <property type="match status" value="1"/>
</dbReference>
<dbReference type="SFLD" id="SFLDG01278">
    <property type="entry name" value="biotin_synthase_like"/>
    <property type="match status" value="1"/>
</dbReference>
<dbReference type="SMART" id="SM00876">
    <property type="entry name" value="BATS"/>
    <property type="match status" value="1"/>
</dbReference>
<dbReference type="SMART" id="SM00729">
    <property type="entry name" value="Elp3"/>
    <property type="match status" value="1"/>
</dbReference>
<dbReference type="SUPFAM" id="SSF102114">
    <property type="entry name" value="Radical SAM enzymes"/>
    <property type="match status" value="1"/>
</dbReference>
<dbReference type="PROSITE" id="PS51918">
    <property type="entry name" value="RADICAL_SAM"/>
    <property type="match status" value="1"/>
</dbReference>
<name>BIOB_BACAN</name>
<comment type="function">
    <text evidence="1">Catalyzes the conversion of dethiobiotin (DTB) to biotin by the insertion of a sulfur atom into dethiobiotin via a radical-based mechanism.</text>
</comment>
<comment type="catalytic activity">
    <reaction evidence="1">
        <text>(4R,5S)-dethiobiotin + (sulfur carrier)-SH + 2 reduced [2Fe-2S]-[ferredoxin] + 2 S-adenosyl-L-methionine = (sulfur carrier)-H + biotin + 2 5'-deoxyadenosine + 2 L-methionine + 2 oxidized [2Fe-2S]-[ferredoxin]</text>
        <dbReference type="Rhea" id="RHEA:22060"/>
        <dbReference type="Rhea" id="RHEA-COMP:10000"/>
        <dbReference type="Rhea" id="RHEA-COMP:10001"/>
        <dbReference type="Rhea" id="RHEA-COMP:14737"/>
        <dbReference type="Rhea" id="RHEA-COMP:14739"/>
        <dbReference type="ChEBI" id="CHEBI:17319"/>
        <dbReference type="ChEBI" id="CHEBI:29917"/>
        <dbReference type="ChEBI" id="CHEBI:33737"/>
        <dbReference type="ChEBI" id="CHEBI:33738"/>
        <dbReference type="ChEBI" id="CHEBI:57586"/>
        <dbReference type="ChEBI" id="CHEBI:57844"/>
        <dbReference type="ChEBI" id="CHEBI:59789"/>
        <dbReference type="ChEBI" id="CHEBI:64428"/>
        <dbReference type="ChEBI" id="CHEBI:149473"/>
        <dbReference type="EC" id="2.8.1.6"/>
    </reaction>
</comment>
<comment type="cofactor">
    <cofactor evidence="1">
        <name>[4Fe-4S] cluster</name>
        <dbReference type="ChEBI" id="CHEBI:49883"/>
    </cofactor>
    <text evidence="1">Binds 1 [4Fe-4S] cluster. The cluster is coordinated with 3 cysteines and an exchangeable S-adenosyl-L-methionine.</text>
</comment>
<comment type="cofactor">
    <cofactor evidence="1">
        <name>[2Fe-2S] cluster</name>
        <dbReference type="ChEBI" id="CHEBI:190135"/>
    </cofactor>
    <text evidence="1">Binds 1 [2Fe-2S] cluster. The cluster is coordinated with 3 cysteines and 1 arginine.</text>
</comment>
<comment type="pathway">
    <text evidence="1">Cofactor biosynthesis; biotin biosynthesis; biotin from 7,8-diaminononanoate: step 2/2.</text>
</comment>
<comment type="subunit">
    <text evidence="1">Homodimer.</text>
</comment>
<comment type="similarity">
    <text evidence="1">Belongs to the radical SAM superfamily. Biotin synthase family.</text>
</comment>
<protein>
    <recommendedName>
        <fullName evidence="1">Biotin synthase</fullName>
        <ecNumber evidence="1">2.8.1.6</ecNumber>
    </recommendedName>
</protein>
<reference key="1">
    <citation type="journal article" date="2003" name="Nature">
        <title>The genome sequence of Bacillus anthracis Ames and comparison to closely related bacteria.</title>
        <authorList>
            <person name="Read T.D."/>
            <person name="Peterson S.N."/>
            <person name="Tourasse N.J."/>
            <person name="Baillie L.W."/>
            <person name="Paulsen I.T."/>
            <person name="Nelson K.E."/>
            <person name="Tettelin H."/>
            <person name="Fouts D.E."/>
            <person name="Eisen J.A."/>
            <person name="Gill S.R."/>
            <person name="Holtzapple E.K."/>
            <person name="Okstad O.A."/>
            <person name="Helgason E."/>
            <person name="Rilstone J."/>
            <person name="Wu M."/>
            <person name="Kolonay J.F."/>
            <person name="Beanan M.J."/>
            <person name="Dodson R.J."/>
            <person name="Brinkac L.M."/>
            <person name="Gwinn M.L."/>
            <person name="DeBoy R.T."/>
            <person name="Madpu R."/>
            <person name="Daugherty S.C."/>
            <person name="Durkin A.S."/>
            <person name="Haft D.H."/>
            <person name="Nelson W.C."/>
            <person name="Peterson J.D."/>
            <person name="Pop M."/>
            <person name="Khouri H.M."/>
            <person name="Radune D."/>
            <person name="Benton J.L."/>
            <person name="Mahamoud Y."/>
            <person name="Jiang L."/>
            <person name="Hance I.R."/>
            <person name="Weidman J.F."/>
            <person name="Berry K.J."/>
            <person name="Plaut R.D."/>
            <person name="Wolf A.M."/>
            <person name="Watkins K.L."/>
            <person name="Nierman W.C."/>
            <person name="Hazen A."/>
            <person name="Cline R.T."/>
            <person name="Redmond C."/>
            <person name="Thwaite J.E."/>
            <person name="White O."/>
            <person name="Salzberg S.L."/>
            <person name="Thomason B."/>
            <person name="Friedlander A.M."/>
            <person name="Koehler T.M."/>
            <person name="Hanna P.C."/>
            <person name="Kolstoe A.-B."/>
            <person name="Fraser C.M."/>
        </authorList>
    </citation>
    <scope>NUCLEOTIDE SEQUENCE [LARGE SCALE GENOMIC DNA]</scope>
    <source>
        <strain>Ames / isolate Porton</strain>
    </source>
</reference>
<reference key="2">
    <citation type="submission" date="2004-01" db="EMBL/GenBank/DDBJ databases">
        <title>Complete genome sequence of Bacillus anthracis Sterne.</title>
        <authorList>
            <person name="Brettin T.S."/>
            <person name="Bruce D."/>
            <person name="Challacombe J.F."/>
            <person name="Gilna P."/>
            <person name="Han C."/>
            <person name="Hill K."/>
            <person name="Hitchcock P."/>
            <person name="Jackson P."/>
            <person name="Keim P."/>
            <person name="Longmire J."/>
            <person name="Lucas S."/>
            <person name="Okinaka R."/>
            <person name="Richardson P."/>
            <person name="Rubin E."/>
            <person name="Tice H."/>
        </authorList>
    </citation>
    <scope>NUCLEOTIDE SEQUENCE [LARGE SCALE GENOMIC DNA]</scope>
    <source>
        <strain>Sterne</strain>
    </source>
</reference>
<reference key="3">
    <citation type="journal article" date="2009" name="J. Bacteriol.">
        <title>The complete genome sequence of Bacillus anthracis Ames 'Ancestor'.</title>
        <authorList>
            <person name="Ravel J."/>
            <person name="Jiang L."/>
            <person name="Stanley S.T."/>
            <person name="Wilson M.R."/>
            <person name="Decker R.S."/>
            <person name="Read T.D."/>
            <person name="Worsham P."/>
            <person name="Keim P.S."/>
            <person name="Salzberg S.L."/>
            <person name="Fraser-Liggett C.M."/>
            <person name="Rasko D.A."/>
        </authorList>
    </citation>
    <scope>NUCLEOTIDE SEQUENCE [LARGE SCALE GENOMIC DNA]</scope>
    <source>
        <strain>Ames ancestor</strain>
    </source>
</reference>
<keyword id="KW-0001">2Fe-2S</keyword>
<keyword id="KW-0004">4Fe-4S</keyword>
<keyword id="KW-0093">Biotin biosynthesis</keyword>
<keyword id="KW-0408">Iron</keyword>
<keyword id="KW-0411">Iron-sulfur</keyword>
<keyword id="KW-0479">Metal-binding</keyword>
<keyword id="KW-1185">Reference proteome</keyword>
<keyword id="KW-0949">S-adenosyl-L-methionine</keyword>
<keyword id="KW-0808">Transferase</keyword>